<name>DNAA_IDILO</name>
<organism>
    <name type="scientific">Idiomarina loihiensis (strain ATCC BAA-735 / DSM 15497 / L2-TR)</name>
    <dbReference type="NCBI Taxonomy" id="283942"/>
    <lineage>
        <taxon>Bacteria</taxon>
        <taxon>Pseudomonadati</taxon>
        <taxon>Pseudomonadota</taxon>
        <taxon>Gammaproteobacteria</taxon>
        <taxon>Alteromonadales</taxon>
        <taxon>Idiomarinaceae</taxon>
        <taxon>Idiomarina</taxon>
    </lineage>
</organism>
<accession>Q5QY39</accession>
<proteinExistence type="inferred from homology"/>
<keyword id="KW-0067">ATP-binding</keyword>
<keyword id="KW-0963">Cytoplasm</keyword>
<keyword id="KW-0235">DNA replication</keyword>
<keyword id="KW-0238">DNA-binding</keyword>
<keyword id="KW-0446">Lipid-binding</keyword>
<keyword id="KW-0547">Nucleotide-binding</keyword>
<keyword id="KW-1185">Reference proteome</keyword>
<feature type="chain" id="PRO_0000114190" description="Chromosomal replication initiator protein DnaA">
    <location>
        <begin position="1"/>
        <end position="454"/>
    </location>
</feature>
<feature type="region of interest" description="Domain I, interacts with DnaA modulators" evidence="1">
    <location>
        <begin position="1"/>
        <end position="81"/>
    </location>
</feature>
<feature type="region of interest" description="Disordered" evidence="2">
    <location>
        <begin position="79"/>
        <end position="110"/>
    </location>
</feature>
<feature type="region of interest" description="Domain II" evidence="1">
    <location>
        <begin position="81"/>
        <end position="117"/>
    </location>
</feature>
<feature type="region of interest" description="Domain III, AAA+ region" evidence="1">
    <location>
        <begin position="118"/>
        <end position="334"/>
    </location>
</feature>
<feature type="region of interest" description="Domain IV, binds dsDNA" evidence="1">
    <location>
        <begin position="335"/>
        <end position="454"/>
    </location>
</feature>
<feature type="compositionally biased region" description="Polar residues" evidence="2">
    <location>
        <begin position="82"/>
        <end position="91"/>
    </location>
</feature>
<feature type="binding site" evidence="1">
    <location>
        <position position="162"/>
    </location>
    <ligand>
        <name>ATP</name>
        <dbReference type="ChEBI" id="CHEBI:30616"/>
    </ligand>
</feature>
<feature type="binding site" evidence="1">
    <location>
        <position position="164"/>
    </location>
    <ligand>
        <name>ATP</name>
        <dbReference type="ChEBI" id="CHEBI:30616"/>
    </ligand>
</feature>
<feature type="binding site" evidence="1">
    <location>
        <position position="165"/>
    </location>
    <ligand>
        <name>ATP</name>
        <dbReference type="ChEBI" id="CHEBI:30616"/>
    </ligand>
</feature>
<feature type="binding site" evidence="1">
    <location>
        <position position="166"/>
    </location>
    <ligand>
        <name>ATP</name>
        <dbReference type="ChEBI" id="CHEBI:30616"/>
    </ligand>
</feature>
<reference key="1">
    <citation type="journal article" date="2004" name="Proc. Natl. Acad. Sci. U.S.A.">
        <title>Genome sequence of the deep-sea gamma-proteobacterium Idiomarina loihiensis reveals amino acid fermentation as a source of carbon and energy.</title>
        <authorList>
            <person name="Hou S."/>
            <person name="Saw J.H."/>
            <person name="Lee K.S."/>
            <person name="Freitas T.A."/>
            <person name="Belisle C."/>
            <person name="Kawarabayasi Y."/>
            <person name="Donachie S.P."/>
            <person name="Pikina A."/>
            <person name="Galperin M.Y."/>
            <person name="Koonin E.V."/>
            <person name="Makarova K.S."/>
            <person name="Omelchenko M.V."/>
            <person name="Sorokin A."/>
            <person name="Wolf Y.I."/>
            <person name="Li Q.X."/>
            <person name="Keum Y.S."/>
            <person name="Campbell S."/>
            <person name="Denery J."/>
            <person name="Aizawa S."/>
            <person name="Shibata S."/>
            <person name="Malahoff A."/>
            <person name="Alam M."/>
        </authorList>
    </citation>
    <scope>NUCLEOTIDE SEQUENCE [LARGE SCALE GENOMIC DNA]</scope>
    <source>
        <strain>ATCC BAA-735 / DSM 15497 / L2-TR</strain>
    </source>
</reference>
<sequence length="454" mass="51511">MNNSLWQQCAERLQSELPLQQFNTWIRPLQAKLNGETLTLFAPNIYSVDWVRDKYLKTINTYLEALCDDKVPNVVLKVGEASPTQRDSGSPQRAAATRRKTPNFSSGNTDVEVPFESNIHPEYTFDNFVEGKSNQLARAAAIQVAENPGGVYNPLFVYGGTGLGKTHLLHAVGNGIMAHKKDAKVFYIRAERFVQDMVNSIRNSSTNEFKRYYRSVDALLIDDIHFFANKKGSQEEFFHTFNALLEGNQQIIMTSDLYPKEIDGVEDRLKSRFGWGLTIAIEPPELETRVAILMRKADERGLHMPHEVAFFIAKRLRSNVRELEGALNRVVANVQLTGRPITIDFVREALRDLIAAQEKLVTIDNIQKTVAEYYNIKLADILSKRRSRSVARPRQLAMALAKELTNHSLPEIGDAFGGRDHTTVLHACRKIQELKDAQHDIKEDYRNLIRTLSS</sequence>
<comment type="function">
    <text evidence="1">Plays an essential role in the initiation and regulation of chromosomal replication. ATP-DnaA binds to the origin of replication (oriC) to initiate formation of the DNA replication initiation complex once per cell cycle. Binds the DnaA box (a 9 base pair repeat at the origin) and separates the double-stranded (ds)DNA. Forms a right-handed helical filament on oriC DNA; dsDNA binds to the exterior of the filament while single-stranded (ss)DNA is stabiized in the filament's interior. The ATP-DnaA-oriC complex binds and stabilizes one strand of the AT-rich DNA unwinding element (DUE), permitting loading of DNA polymerase. After initiation quickly degrades to an ADP-DnaA complex that is not apt for DNA replication. Binds acidic phospholipids.</text>
</comment>
<comment type="subunit">
    <text evidence="1">Oligomerizes as a right-handed, spiral filament on DNA at oriC.</text>
</comment>
<comment type="subcellular location">
    <subcellularLocation>
        <location evidence="1">Cytoplasm</location>
    </subcellularLocation>
</comment>
<comment type="domain">
    <text evidence="1">Domain I is involved in oligomerization and binding regulators, domain II is flexibile and of varying length in different bacteria, domain III forms the AAA+ region, while domain IV binds dsDNA.</text>
</comment>
<comment type="similarity">
    <text evidence="1">Belongs to the DnaA family.</text>
</comment>
<gene>
    <name evidence="1" type="primary">dnaA</name>
    <name type="ordered locus">IL0001</name>
</gene>
<protein>
    <recommendedName>
        <fullName evidence="1">Chromosomal replication initiator protein DnaA</fullName>
    </recommendedName>
</protein>
<dbReference type="EMBL" id="AE017340">
    <property type="protein sequence ID" value="AAV80845.1"/>
    <property type="molecule type" value="Genomic_DNA"/>
</dbReference>
<dbReference type="RefSeq" id="WP_011233265.1">
    <property type="nucleotide sequence ID" value="NC_006512.1"/>
</dbReference>
<dbReference type="SMR" id="Q5QY39"/>
<dbReference type="STRING" id="283942.IL0001"/>
<dbReference type="GeneID" id="41335149"/>
<dbReference type="KEGG" id="ilo:IL0001"/>
<dbReference type="eggNOG" id="COG0593">
    <property type="taxonomic scope" value="Bacteria"/>
</dbReference>
<dbReference type="HOGENOM" id="CLU_026910_0_1_6"/>
<dbReference type="OrthoDB" id="9807019at2"/>
<dbReference type="Proteomes" id="UP000001171">
    <property type="component" value="Chromosome"/>
</dbReference>
<dbReference type="GO" id="GO:0005737">
    <property type="term" value="C:cytoplasm"/>
    <property type="evidence" value="ECO:0007669"/>
    <property type="project" value="UniProtKB-SubCell"/>
</dbReference>
<dbReference type="GO" id="GO:0005886">
    <property type="term" value="C:plasma membrane"/>
    <property type="evidence" value="ECO:0007669"/>
    <property type="project" value="TreeGrafter"/>
</dbReference>
<dbReference type="GO" id="GO:0005524">
    <property type="term" value="F:ATP binding"/>
    <property type="evidence" value="ECO:0007669"/>
    <property type="project" value="UniProtKB-UniRule"/>
</dbReference>
<dbReference type="GO" id="GO:0016887">
    <property type="term" value="F:ATP hydrolysis activity"/>
    <property type="evidence" value="ECO:0007669"/>
    <property type="project" value="InterPro"/>
</dbReference>
<dbReference type="GO" id="GO:0003688">
    <property type="term" value="F:DNA replication origin binding"/>
    <property type="evidence" value="ECO:0007669"/>
    <property type="project" value="UniProtKB-UniRule"/>
</dbReference>
<dbReference type="GO" id="GO:0008289">
    <property type="term" value="F:lipid binding"/>
    <property type="evidence" value="ECO:0007669"/>
    <property type="project" value="UniProtKB-KW"/>
</dbReference>
<dbReference type="GO" id="GO:0006270">
    <property type="term" value="P:DNA replication initiation"/>
    <property type="evidence" value="ECO:0007669"/>
    <property type="project" value="UniProtKB-UniRule"/>
</dbReference>
<dbReference type="GO" id="GO:0006275">
    <property type="term" value="P:regulation of DNA replication"/>
    <property type="evidence" value="ECO:0007669"/>
    <property type="project" value="UniProtKB-UniRule"/>
</dbReference>
<dbReference type="CDD" id="cd00009">
    <property type="entry name" value="AAA"/>
    <property type="match status" value="1"/>
</dbReference>
<dbReference type="CDD" id="cd06571">
    <property type="entry name" value="Bac_DnaA_C"/>
    <property type="match status" value="1"/>
</dbReference>
<dbReference type="FunFam" id="1.10.1750.10:FF:000001">
    <property type="entry name" value="Chromosomal replication initiator protein DnaA"/>
    <property type="match status" value="1"/>
</dbReference>
<dbReference type="FunFam" id="1.10.8.60:FF:000003">
    <property type="entry name" value="Chromosomal replication initiator protein DnaA"/>
    <property type="match status" value="1"/>
</dbReference>
<dbReference type="FunFam" id="3.40.50.300:FF:000103">
    <property type="entry name" value="Chromosomal replication initiator protein DnaA"/>
    <property type="match status" value="1"/>
</dbReference>
<dbReference type="Gene3D" id="1.10.1750.10">
    <property type="match status" value="1"/>
</dbReference>
<dbReference type="Gene3D" id="1.10.8.60">
    <property type="match status" value="1"/>
</dbReference>
<dbReference type="Gene3D" id="3.30.300.180">
    <property type="match status" value="1"/>
</dbReference>
<dbReference type="Gene3D" id="3.40.50.300">
    <property type="entry name" value="P-loop containing nucleotide triphosphate hydrolases"/>
    <property type="match status" value="1"/>
</dbReference>
<dbReference type="HAMAP" id="MF_00377">
    <property type="entry name" value="DnaA_bact"/>
    <property type="match status" value="1"/>
</dbReference>
<dbReference type="InterPro" id="IPR003593">
    <property type="entry name" value="AAA+_ATPase"/>
</dbReference>
<dbReference type="InterPro" id="IPR001957">
    <property type="entry name" value="Chromosome_initiator_DnaA"/>
</dbReference>
<dbReference type="InterPro" id="IPR020591">
    <property type="entry name" value="Chromosome_initiator_DnaA-like"/>
</dbReference>
<dbReference type="InterPro" id="IPR018312">
    <property type="entry name" value="Chromosome_initiator_DnaA_CS"/>
</dbReference>
<dbReference type="InterPro" id="IPR013159">
    <property type="entry name" value="DnaA_C"/>
</dbReference>
<dbReference type="InterPro" id="IPR013317">
    <property type="entry name" value="DnaA_dom"/>
</dbReference>
<dbReference type="InterPro" id="IPR024633">
    <property type="entry name" value="DnaA_N_dom"/>
</dbReference>
<dbReference type="InterPro" id="IPR038454">
    <property type="entry name" value="DnaA_N_sf"/>
</dbReference>
<dbReference type="InterPro" id="IPR055199">
    <property type="entry name" value="Hda_lid"/>
</dbReference>
<dbReference type="InterPro" id="IPR027417">
    <property type="entry name" value="P-loop_NTPase"/>
</dbReference>
<dbReference type="InterPro" id="IPR010921">
    <property type="entry name" value="Trp_repressor/repl_initiator"/>
</dbReference>
<dbReference type="NCBIfam" id="TIGR00362">
    <property type="entry name" value="DnaA"/>
    <property type="match status" value="1"/>
</dbReference>
<dbReference type="PANTHER" id="PTHR30050">
    <property type="entry name" value="CHROMOSOMAL REPLICATION INITIATOR PROTEIN DNAA"/>
    <property type="match status" value="1"/>
</dbReference>
<dbReference type="PANTHER" id="PTHR30050:SF2">
    <property type="entry name" value="CHROMOSOMAL REPLICATION INITIATOR PROTEIN DNAA"/>
    <property type="match status" value="1"/>
</dbReference>
<dbReference type="Pfam" id="PF00308">
    <property type="entry name" value="Bac_DnaA"/>
    <property type="match status" value="1"/>
</dbReference>
<dbReference type="Pfam" id="PF08299">
    <property type="entry name" value="Bac_DnaA_C"/>
    <property type="match status" value="1"/>
</dbReference>
<dbReference type="Pfam" id="PF11638">
    <property type="entry name" value="DnaA_N"/>
    <property type="match status" value="1"/>
</dbReference>
<dbReference type="Pfam" id="PF22688">
    <property type="entry name" value="Hda_lid"/>
    <property type="match status" value="1"/>
</dbReference>
<dbReference type="PRINTS" id="PR00051">
    <property type="entry name" value="DNAA"/>
</dbReference>
<dbReference type="SMART" id="SM00382">
    <property type="entry name" value="AAA"/>
    <property type="match status" value="1"/>
</dbReference>
<dbReference type="SMART" id="SM00760">
    <property type="entry name" value="Bac_DnaA_C"/>
    <property type="match status" value="1"/>
</dbReference>
<dbReference type="SUPFAM" id="SSF52540">
    <property type="entry name" value="P-loop containing nucleoside triphosphate hydrolases"/>
    <property type="match status" value="1"/>
</dbReference>
<dbReference type="SUPFAM" id="SSF48295">
    <property type="entry name" value="TrpR-like"/>
    <property type="match status" value="1"/>
</dbReference>
<dbReference type="PROSITE" id="PS01008">
    <property type="entry name" value="DNAA"/>
    <property type="match status" value="1"/>
</dbReference>
<evidence type="ECO:0000255" key="1">
    <source>
        <dbReference type="HAMAP-Rule" id="MF_00377"/>
    </source>
</evidence>
<evidence type="ECO:0000256" key="2">
    <source>
        <dbReference type="SAM" id="MobiDB-lite"/>
    </source>
</evidence>